<sequence length="832" mass="94694">MPLEMDQKVNKLTFGCQRSSTSDDDSGCAMEEYTWVPPGLRPEQVQLYFACLPEEKIPYVNSIGEKYRIKQLLYQLPPHDNEVRYCQSLCEEEKKELQMFSGQRKKEALGRGNIKMLSRAVMHAMCEKCGEKINGGEIAIFVSRAGPGVCWHPSCFVCSTCNELLVDLIYFYQDGKIHCGRHHAELLKPRCSACDEIIFADECTEAEGRHWHMNHFCCYECETVLGGQRYIMKDGRPFCCGCFESHYAEYCESCGDHIGVDHAQMTYDGQHWHATETCFSCAQCKVSLLGCPFLPKKGRIYCSKACSLGEDVHASDSSDSAFQSARSRESRRSVRMGKSSRSADQCRQSLLLSPALNYKFPGMSGNADDTLSRKMDDLGISRQGAGFDNDFWKARDEQETPEDHEEWAEHDDYMTQLLLKFGEKGLFQQPSEDNRSTEHWMSENIKGKNDLQRNNRNKSLASKKYQSDMYWTQSQDGLGDSAYGSHPGPASSRKLQELDMDHGASAYMHEKMPWYKRSLECLSDNLKPQNENIRDSMDSLALSNITGASVDGENKSRPSLFCYQNFQDLNTRDCEKMSNMGTLNSSMLNRSTESLKSLTSEICQEKPPPEEKPMHTSALRRSKSQTRPQVKFSDDVIDNGDYGSIEIRQPPMSERSRRRVYNFEERSQRPHHHRRRKSRKSRSENALHLATDSKPSGKERNRFYTAEDYERLFHNKSAHQVQAYIQNADLFGQYSNAASNVGLPSKVAGKFLGLYGEDEDSWCSTCSSSSSDSEEEGYFLGQPIPKPRPQRYQYFSDDLCSPTNALSSSQFSQRTTKSKKKKGHKGKNCIIS</sequence>
<keyword id="KW-1003">Cell membrane</keyword>
<keyword id="KW-0217">Developmental protein</keyword>
<keyword id="KW-0306">Gastrulation</keyword>
<keyword id="KW-0440">LIM domain</keyword>
<keyword id="KW-0449">Lipoprotein</keyword>
<keyword id="KW-0472">Membrane</keyword>
<keyword id="KW-0479">Metal-binding</keyword>
<keyword id="KW-0488">Methylation</keyword>
<keyword id="KW-0636">Prenylation</keyword>
<keyword id="KW-1185">Reference proteome</keyword>
<keyword id="KW-0677">Repeat</keyword>
<keyword id="KW-0862">Zinc</keyword>
<protein>
    <recommendedName>
        <fullName>Prickle-like protein 1-B</fullName>
    </recommendedName>
    <alternativeName>
        <fullName>XPk-B</fullName>
    </alternativeName>
</protein>
<gene>
    <name type="primary">prickle1-b</name>
    <name type="synonym">pk-b</name>
    <name type="synonym">prickle-b</name>
</gene>
<accession>Q90WV2</accession>
<accession>Q6GPD3</accession>
<reference evidence="8 10" key="1">
    <citation type="journal article" date="2002" name="Mech. Dev.">
        <title>Cloning and expression of Xenopus Prickle, an orthologue of a Drosophila planar cell polarity gene.</title>
        <authorList>
            <person name="Wallingford J.B."/>
            <person name="Goto T."/>
            <person name="Keller R."/>
            <person name="Harland R.M."/>
        </authorList>
    </citation>
    <scope>NUCLEOTIDE SEQUENCE [MRNA]</scope>
    <scope>TISSUE SPECIFICITY</scope>
    <scope>DEVELOPMENTAL STAGE</scope>
    <source>
        <tissue evidence="6">Gastrula</tissue>
    </source>
</reference>
<reference evidence="9" key="2">
    <citation type="submission" date="2004-06" db="EMBL/GenBank/DDBJ databases">
        <authorList>
            <consortium name="NIH - Xenopus Gene Collection (XGC) project"/>
        </authorList>
    </citation>
    <scope>NUCLEOTIDE SEQUENCE [LARGE SCALE MRNA]</scope>
    <source>
        <tissue evidence="9">Gastrula</tissue>
    </source>
</reference>
<reference evidence="8" key="3">
    <citation type="journal article" date="2005" name="Curr. Biol.">
        <title>Planar cell polarity genes regulate polarized extracellular matrix deposition during frog gastrulation.</title>
        <authorList>
            <person name="Goto T."/>
            <person name="Davidson L."/>
            <person name="Asashima M."/>
            <person name="Keller R."/>
        </authorList>
    </citation>
    <scope>FUNCTION</scope>
</reference>
<proteinExistence type="evidence at transcript level"/>
<name>PRI1B_XENLA</name>
<organism>
    <name type="scientific">Xenopus laevis</name>
    <name type="common">African clawed frog</name>
    <dbReference type="NCBI Taxonomy" id="8355"/>
    <lineage>
        <taxon>Eukaryota</taxon>
        <taxon>Metazoa</taxon>
        <taxon>Chordata</taxon>
        <taxon>Craniata</taxon>
        <taxon>Vertebrata</taxon>
        <taxon>Euteleostomi</taxon>
        <taxon>Amphibia</taxon>
        <taxon>Batrachia</taxon>
        <taxon>Anura</taxon>
        <taxon>Pipoidea</taxon>
        <taxon>Pipidae</taxon>
        <taxon>Xenopodinae</taxon>
        <taxon>Xenopus</taxon>
        <taxon>Xenopus</taxon>
    </lineage>
</organism>
<evidence type="ECO:0000250" key="1"/>
<evidence type="ECO:0000250" key="2">
    <source>
        <dbReference type="UniProtKB" id="Q90Z06"/>
    </source>
</evidence>
<evidence type="ECO:0000255" key="3">
    <source>
        <dbReference type="PROSITE-ProRule" id="PRU00125"/>
    </source>
</evidence>
<evidence type="ECO:0000255" key="4">
    <source>
        <dbReference type="PROSITE-ProRule" id="PRU00636"/>
    </source>
</evidence>
<evidence type="ECO:0000256" key="5">
    <source>
        <dbReference type="SAM" id="MobiDB-lite"/>
    </source>
</evidence>
<evidence type="ECO:0000269" key="6">
    <source>
    </source>
</evidence>
<evidence type="ECO:0000269" key="7">
    <source>
    </source>
</evidence>
<evidence type="ECO:0000305" key="8"/>
<evidence type="ECO:0000312" key="9">
    <source>
        <dbReference type="EMBL" id="AAH73208.1"/>
    </source>
</evidence>
<evidence type="ECO:0000312" key="10">
    <source>
        <dbReference type="EMBL" id="AAL16403.1"/>
    </source>
</evidence>
<dbReference type="EMBL" id="AY055473">
    <property type="protein sequence ID" value="AAL16403.1"/>
    <property type="status" value="ALT_INIT"/>
    <property type="molecule type" value="mRNA"/>
</dbReference>
<dbReference type="EMBL" id="BC073208">
    <property type="protein sequence ID" value="AAH73208.1"/>
    <property type="status" value="ALT_INIT"/>
    <property type="molecule type" value="mRNA"/>
</dbReference>
<dbReference type="RefSeq" id="NP_001082169.1">
    <property type="nucleotide sequence ID" value="NM_001088700.1"/>
</dbReference>
<dbReference type="SMR" id="Q90WV2"/>
<dbReference type="DNASU" id="398264"/>
<dbReference type="GeneID" id="398264"/>
<dbReference type="KEGG" id="xla:398264"/>
<dbReference type="AGR" id="Xenbase:XB-GENE-6251800"/>
<dbReference type="CTD" id="398264"/>
<dbReference type="Xenbase" id="XB-GENE-6251800">
    <property type="gene designation" value="prickle1.L"/>
</dbReference>
<dbReference type="OrthoDB" id="10069167at2759"/>
<dbReference type="Proteomes" id="UP000186698">
    <property type="component" value="Chromosome 3L"/>
</dbReference>
<dbReference type="Bgee" id="398264">
    <property type="expression patterns" value="Expressed in gastrula and 19 other cell types or tissues"/>
</dbReference>
<dbReference type="GO" id="GO:0005886">
    <property type="term" value="C:plasma membrane"/>
    <property type="evidence" value="ECO:0007669"/>
    <property type="project" value="UniProtKB-SubCell"/>
</dbReference>
<dbReference type="GO" id="GO:0008270">
    <property type="term" value="F:zinc ion binding"/>
    <property type="evidence" value="ECO:0007669"/>
    <property type="project" value="InterPro"/>
</dbReference>
<dbReference type="GO" id="GO:0009948">
    <property type="term" value="P:anterior/posterior axis specification"/>
    <property type="evidence" value="ECO:0000250"/>
    <property type="project" value="UniProtKB"/>
</dbReference>
<dbReference type="GO" id="GO:0060027">
    <property type="term" value="P:convergent extension involved in gastrulation"/>
    <property type="evidence" value="ECO:0000250"/>
    <property type="project" value="UniProtKB"/>
</dbReference>
<dbReference type="CDD" id="cd09415">
    <property type="entry name" value="LIM1_Prickle"/>
    <property type="match status" value="1"/>
</dbReference>
<dbReference type="CDD" id="cd09418">
    <property type="entry name" value="LIM2_Prickle"/>
    <property type="match status" value="1"/>
</dbReference>
<dbReference type="CDD" id="cd09420">
    <property type="entry name" value="LIM3_Prickle"/>
    <property type="match status" value="1"/>
</dbReference>
<dbReference type="CDD" id="cd09827">
    <property type="entry name" value="PET_Prickle"/>
    <property type="match status" value="1"/>
</dbReference>
<dbReference type="FunFam" id="2.10.110.10:FF:000022">
    <property type="entry name" value="prickle-like protein 2 isoform X1"/>
    <property type="match status" value="1"/>
</dbReference>
<dbReference type="FunFam" id="2.10.110.10:FF:000035">
    <property type="entry name" value="prickle-like protein 2 isoform X1"/>
    <property type="match status" value="1"/>
</dbReference>
<dbReference type="FunFam" id="2.10.110.10:FF:000005">
    <property type="entry name" value="Testin isoform 1"/>
    <property type="match status" value="1"/>
</dbReference>
<dbReference type="Gene3D" id="2.10.110.10">
    <property type="entry name" value="Cysteine Rich Protein"/>
    <property type="match status" value="3"/>
</dbReference>
<dbReference type="InterPro" id="IPR033725">
    <property type="entry name" value="LIM1_prickle"/>
</dbReference>
<dbReference type="InterPro" id="IPR033726">
    <property type="entry name" value="LIM2_prickle"/>
</dbReference>
<dbReference type="InterPro" id="IPR033727">
    <property type="entry name" value="LIM3_prickle"/>
</dbReference>
<dbReference type="InterPro" id="IPR010442">
    <property type="entry name" value="PET_domain"/>
</dbReference>
<dbReference type="InterPro" id="IPR033723">
    <property type="entry name" value="PET_prickle"/>
</dbReference>
<dbReference type="InterPro" id="IPR047120">
    <property type="entry name" value="Pk/Esn/Tes"/>
</dbReference>
<dbReference type="InterPro" id="IPR001781">
    <property type="entry name" value="Znf_LIM"/>
</dbReference>
<dbReference type="PANTHER" id="PTHR24211">
    <property type="entry name" value="LIM DOMAIN-CONTAINING PROTEIN"/>
    <property type="match status" value="1"/>
</dbReference>
<dbReference type="PANTHER" id="PTHR24211:SF15">
    <property type="entry name" value="PRICKLE-LIKE PROTEIN 1"/>
    <property type="match status" value="1"/>
</dbReference>
<dbReference type="Pfam" id="PF00412">
    <property type="entry name" value="LIM"/>
    <property type="match status" value="3"/>
</dbReference>
<dbReference type="Pfam" id="PF06297">
    <property type="entry name" value="PET"/>
    <property type="match status" value="1"/>
</dbReference>
<dbReference type="SMART" id="SM00132">
    <property type="entry name" value="LIM"/>
    <property type="match status" value="3"/>
</dbReference>
<dbReference type="SUPFAM" id="SSF57716">
    <property type="entry name" value="Glucocorticoid receptor-like (DNA-binding domain)"/>
    <property type="match status" value="2"/>
</dbReference>
<dbReference type="PROSITE" id="PS00478">
    <property type="entry name" value="LIM_DOMAIN_1"/>
    <property type="match status" value="2"/>
</dbReference>
<dbReference type="PROSITE" id="PS50023">
    <property type="entry name" value="LIM_DOMAIN_2"/>
    <property type="match status" value="3"/>
</dbReference>
<dbReference type="PROSITE" id="PS51303">
    <property type="entry name" value="PET"/>
    <property type="match status" value="1"/>
</dbReference>
<comment type="function">
    <text evidence="2 7">Acts in a planar cell polarity (PCP) complex; polarization along the apical/basal axis of epithelial cells. Regulates the polarized assembly of fibronectrin on the surface of the mesoderm during gastrulation. Essential for gastrulation cell movements, cooperating with dvl2/dsh to activate jnk. Acts together with tes to control axial elongation.</text>
</comment>
<comment type="subunit">
    <text evidence="2">Interacts with dvl2/dsh and mapk8/jnk1.</text>
</comment>
<comment type="subcellular location">
    <subcellularLocation>
        <location evidence="1">Cell membrane</location>
        <topology evidence="1">Peripheral membrane protein</topology>
        <orientation evidence="1">Cytoplasmic side</orientation>
    </subcellularLocation>
</comment>
<comment type="tissue specificity">
    <text evidence="6">Expressed in the dorsal marginal zone of early gastrulae (stage 10). As gastrulation proceeds, expression expands to include the lateral and ventral marginal zones, excluding the few rows of cells above the blastopore lip. Expression moves dorsally with gastrulation cell movements, and by the end of gastrulation expression is seen in dorsal mesoderm and posterior but not anterior neural ectoderm. Expression becomes down-regulated in mesoderm but remains strong in posterior ectoderm through the neurula stages. During tailbud stages, expressed in the pronephric duct, tailbud, tailtip and forming somites. In the most posterior regions, expressed in notochord and in the floorplate of the neural tube with weak expression in the roofplate. At stage 30, expressed in a complex pattern in the head including strong expression in the lens and otic vesicle.</text>
</comment>
<comment type="developmental stage">
    <text evidence="6">Expressed both maternally and zygotically. Zygotic expression begins at the onset of gastrulation (stage 10), and steadily increases until tadpole stage (stage 30).</text>
</comment>
<comment type="similarity">
    <text evidence="8">Belongs to the prickle / espinas / testin family.</text>
</comment>
<comment type="sequence caution" evidence="8">
    <conflict type="erroneous initiation">
        <sequence resource="EMBL-CDS" id="AAH73208"/>
    </conflict>
</comment>
<comment type="sequence caution" evidence="8">
    <conflict type="erroneous initiation">
        <sequence resource="EMBL-CDS" id="AAL16403"/>
    </conflict>
</comment>
<feature type="chain" id="PRO_0000288830" description="Prickle-like protein 1-B">
    <location>
        <begin position="1"/>
        <end position="829"/>
    </location>
</feature>
<feature type="propeptide" id="PRO_0000396716" description="Removed in mature form" evidence="1">
    <location>
        <begin position="830"/>
        <end position="832"/>
    </location>
</feature>
<feature type="domain" description="PET" evidence="4">
    <location>
        <begin position="14"/>
        <end position="122"/>
    </location>
</feature>
<feature type="domain" description="LIM zinc-binding 1" evidence="3">
    <location>
        <begin position="124"/>
        <end position="188"/>
    </location>
</feature>
<feature type="domain" description="LIM zinc-binding 2" evidence="3">
    <location>
        <begin position="189"/>
        <end position="249"/>
    </location>
</feature>
<feature type="domain" description="LIM zinc-binding 3" evidence="3">
    <location>
        <begin position="250"/>
        <end position="313"/>
    </location>
</feature>
<feature type="region of interest" description="Disordered" evidence="5">
    <location>
        <begin position="312"/>
        <end position="346"/>
    </location>
</feature>
<feature type="region of interest" description="Disordered" evidence="5">
    <location>
        <begin position="428"/>
        <end position="455"/>
    </location>
</feature>
<feature type="region of interest" description="Disordered" evidence="5">
    <location>
        <begin position="602"/>
        <end position="701"/>
    </location>
</feature>
<feature type="region of interest" description="Disordered" evidence="5">
    <location>
        <begin position="766"/>
        <end position="832"/>
    </location>
</feature>
<feature type="compositionally biased region" description="Basic and acidic residues" evidence="5">
    <location>
        <begin position="432"/>
        <end position="453"/>
    </location>
</feature>
<feature type="compositionally biased region" description="Basic and acidic residues" evidence="5">
    <location>
        <begin position="603"/>
        <end position="614"/>
    </location>
</feature>
<feature type="compositionally biased region" description="Basic residues" evidence="5">
    <location>
        <begin position="669"/>
        <end position="680"/>
    </location>
</feature>
<feature type="compositionally biased region" description="Basic residues" evidence="5">
    <location>
        <begin position="816"/>
        <end position="832"/>
    </location>
</feature>
<feature type="modified residue" description="Cysteine methyl ester" evidence="1">
    <location>
        <position position="829"/>
    </location>
</feature>
<feature type="lipid moiety-binding region" description="S-farnesyl cysteine" evidence="1">
    <location>
        <position position="829"/>
    </location>
</feature>
<feature type="sequence conflict" description="In Ref. 2; AAH73208." evidence="8" ref="2">
    <original>P</original>
    <variation>S</variation>
    <location>
        <position position="2"/>
    </location>
</feature>
<feature type="sequence conflict" description="In Ref. 2; AAH73208." evidence="8" ref="2">
    <original>S</original>
    <variation>P</variation>
    <location>
        <position position="431"/>
    </location>
</feature>